<comment type="function">
    <text evidence="1">Catalyzes the transfer of an acetyl group from acetyl-CoA to tetrahydrodipicolinate.</text>
</comment>
<comment type="catalytic activity">
    <reaction evidence="1">
        <text>(S)-2,3,4,5-tetrahydrodipicolinate + acetyl-CoA + H2O = L-2-acetamido-6-oxoheptanedioate + CoA</text>
        <dbReference type="Rhea" id="RHEA:13085"/>
        <dbReference type="ChEBI" id="CHEBI:15377"/>
        <dbReference type="ChEBI" id="CHEBI:16845"/>
        <dbReference type="ChEBI" id="CHEBI:57287"/>
        <dbReference type="ChEBI" id="CHEBI:57288"/>
        <dbReference type="ChEBI" id="CHEBI:58117"/>
        <dbReference type="EC" id="2.3.1.89"/>
    </reaction>
</comment>
<comment type="pathway">
    <text evidence="1">Amino-acid biosynthesis; L-lysine biosynthesis via DAP pathway; LL-2,6-diaminopimelate from (S)-tetrahydrodipicolinate (acetylase route): step 1/3.</text>
</comment>
<comment type="similarity">
    <text evidence="1">Belongs to the transferase hexapeptide repeat family. DapH subfamily.</text>
</comment>
<feature type="chain" id="PRO_0000376670" description="2,3,4,5-tetrahydropyridine-2,6-dicarboxylate N-acetyltransferase">
    <location>
        <begin position="1"/>
        <end position="234"/>
    </location>
</feature>
<gene>
    <name evidence="1" type="primary">dapH</name>
    <name type="ordered locus">LSL_0468</name>
</gene>
<keyword id="KW-0012">Acyltransferase</keyword>
<keyword id="KW-0028">Amino-acid biosynthesis</keyword>
<keyword id="KW-0220">Diaminopimelate biosynthesis</keyword>
<keyword id="KW-0457">Lysine biosynthesis</keyword>
<keyword id="KW-1185">Reference proteome</keyword>
<keyword id="KW-0677">Repeat</keyword>
<keyword id="KW-0808">Transferase</keyword>
<evidence type="ECO:0000255" key="1">
    <source>
        <dbReference type="HAMAP-Rule" id="MF_01691"/>
    </source>
</evidence>
<protein>
    <recommendedName>
        <fullName evidence="1">2,3,4,5-tetrahydropyridine-2,6-dicarboxylate N-acetyltransferase</fullName>
        <ecNumber evidence="1">2.3.1.89</ecNumber>
    </recommendedName>
    <alternativeName>
        <fullName evidence="1">Tetrahydrodipicolinate N-acetyltransferase</fullName>
        <shortName evidence="1">THP acetyltransferase</shortName>
        <shortName evidence="1">Tetrahydropicolinate acetylase</shortName>
    </alternativeName>
</protein>
<name>DAPH_LIGS1</name>
<organism>
    <name type="scientific">Ligilactobacillus salivarius (strain UCC118)</name>
    <name type="common">Lactobacillus salivarius</name>
    <dbReference type="NCBI Taxonomy" id="362948"/>
    <lineage>
        <taxon>Bacteria</taxon>
        <taxon>Bacillati</taxon>
        <taxon>Bacillota</taxon>
        <taxon>Bacilli</taxon>
        <taxon>Lactobacillales</taxon>
        <taxon>Lactobacillaceae</taxon>
        <taxon>Ligilactobacillus</taxon>
    </lineage>
</organism>
<reference key="1">
    <citation type="journal article" date="2006" name="Proc. Natl. Acad. Sci. U.S.A.">
        <title>Multireplicon genome architecture of Lactobacillus salivarius.</title>
        <authorList>
            <person name="Claesson M.J."/>
            <person name="Li Y."/>
            <person name="Leahy S."/>
            <person name="Canchaya C."/>
            <person name="van Pijkeren J.P."/>
            <person name="Cerdeno-Tarraga A.M."/>
            <person name="Parkhill J."/>
            <person name="Flynn S."/>
            <person name="O'Sullivan G.C."/>
            <person name="Collins J.K."/>
            <person name="Higgins D."/>
            <person name="Shanahan F."/>
            <person name="Fitzgerald G.F."/>
            <person name="van Sinderen D."/>
            <person name="O'Toole P.W."/>
        </authorList>
    </citation>
    <scope>NUCLEOTIDE SEQUENCE [LARGE SCALE GENOMIC DNA]</scope>
    <source>
        <strain>UCC118</strain>
    </source>
</reference>
<proteinExistence type="inferred from homology"/>
<dbReference type="EC" id="2.3.1.89" evidence="1"/>
<dbReference type="EMBL" id="CP000233">
    <property type="protein sequence ID" value="ABD99277.1"/>
    <property type="molecule type" value="Genomic_DNA"/>
</dbReference>
<dbReference type="RefSeq" id="YP_535360.1">
    <property type="nucleotide sequence ID" value="NC_007929.1"/>
</dbReference>
<dbReference type="SMR" id="Q1WUQ8"/>
<dbReference type="STRING" id="362948.LSL_0468"/>
<dbReference type="KEGG" id="lsl:LSL_0468"/>
<dbReference type="PATRIC" id="fig|362948.14.peg.544"/>
<dbReference type="HOGENOM" id="CLU_103751_0_0_9"/>
<dbReference type="OrthoDB" id="9788080at2"/>
<dbReference type="UniPathway" id="UPA00034">
    <property type="reaction ID" value="UER00022"/>
</dbReference>
<dbReference type="Proteomes" id="UP000006559">
    <property type="component" value="Chromosome"/>
</dbReference>
<dbReference type="GO" id="GO:0047200">
    <property type="term" value="F:tetrahydrodipicolinate N-acetyltransferase activity"/>
    <property type="evidence" value="ECO:0007669"/>
    <property type="project" value="UniProtKB-EC"/>
</dbReference>
<dbReference type="GO" id="GO:0019877">
    <property type="term" value="P:diaminopimelate biosynthetic process"/>
    <property type="evidence" value="ECO:0007669"/>
    <property type="project" value="UniProtKB-UniRule"/>
</dbReference>
<dbReference type="GO" id="GO:0009089">
    <property type="term" value="P:lysine biosynthetic process via diaminopimelate"/>
    <property type="evidence" value="ECO:0007669"/>
    <property type="project" value="UniProtKB-UniRule"/>
</dbReference>
<dbReference type="Gene3D" id="2.160.10.10">
    <property type="entry name" value="Hexapeptide repeat proteins"/>
    <property type="match status" value="1"/>
</dbReference>
<dbReference type="Gene3D" id="3.30.70.250">
    <property type="entry name" value="Malonyl-CoA ACP transacylase, ACP-binding"/>
    <property type="match status" value="1"/>
</dbReference>
<dbReference type="HAMAP" id="MF_01691">
    <property type="entry name" value="DapH"/>
    <property type="match status" value="1"/>
</dbReference>
<dbReference type="InterPro" id="IPR019873">
    <property type="entry name" value="DapH"/>
</dbReference>
<dbReference type="InterPro" id="IPR013710">
    <property type="entry name" value="DapH_N"/>
</dbReference>
<dbReference type="InterPro" id="IPR001451">
    <property type="entry name" value="Hexapep"/>
</dbReference>
<dbReference type="InterPro" id="IPR018357">
    <property type="entry name" value="Hexapep_transf_CS"/>
</dbReference>
<dbReference type="InterPro" id="IPR050179">
    <property type="entry name" value="Trans_hexapeptide_repeat"/>
</dbReference>
<dbReference type="InterPro" id="IPR011004">
    <property type="entry name" value="Trimer_LpxA-like_sf"/>
</dbReference>
<dbReference type="NCBIfam" id="TIGR03532">
    <property type="entry name" value="DapD_Ac"/>
    <property type="match status" value="1"/>
</dbReference>
<dbReference type="PANTHER" id="PTHR43300:SF10">
    <property type="entry name" value="2,3,4,5-TETRAHYDROPYRIDINE-2,6-DICARBOXYLATE N-ACETYLTRANSFERASE"/>
    <property type="match status" value="1"/>
</dbReference>
<dbReference type="PANTHER" id="PTHR43300">
    <property type="entry name" value="ACETYLTRANSFERASE"/>
    <property type="match status" value="1"/>
</dbReference>
<dbReference type="Pfam" id="PF08503">
    <property type="entry name" value="DapH_N"/>
    <property type="match status" value="1"/>
</dbReference>
<dbReference type="Pfam" id="PF00132">
    <property type="entry name" value="Hexapep"/>
    <property type="match status" value="1"/>
</dbReference>
<dbReference type="Pfam" id="PF14602">
    <property type="entry name" value="Hexapep_2"/>
    <property type="match status" value="2"/>
</dbReference>
<dbReference type="SUPFAM" id="SSF51161">
    <property type="entry name" value="Trimeric LpxA-like enzymes"/>
    <property type="match status" value="1"/>
</dbReference>
<dbReference type="PROSITE" id="PS00101">
    <property type="entry name" value="HEXAPEP_TRANSFERASES"/>
    <property type="match status" value="1"/>
</dbReference>
<accession>Q1WUQ8</accession>
<sequence length="234" mass="24653">MAKLDAHDIIRTIAESKKKTPVKVYVKGDLNSLDVPSNVETYFTDNVGVMFGDWADVEPILKDSSVESYHLENDGRNTGVAMVDKKKFNARIEPGAIIRDQVEIGDNAVVMMGAVINIGAEIGEGSMIDMGAVLGGRAIVGKNCHIGAGTVLAGVVEPPSAQPVVIEDDVLIGANAVVLEGVRVGKGAVVGAGAVVTKDVEPYTVVMGMPAKKVKDVSQVDDSKTEIVDDLRKL</sequence>